<feature type="signal peptide" evidence="1">
    <location>
        <begin position="1"/>
        <end position="23"/>
    </location>
</feature>
<feature type="chain" id="PRO_0000344531" description="JmjC domain-containing protein 8" evidence="1">
    <location>
        <begin position="24"/>
        <end position="264"/>
    </location>
</feature>
<feature type="domain" description="JmjC" evidence="3">
    <location>
        <begin position="131"/>
        <end position="264"/>
    </location>
</feature>
<feature type="glycosylation site" description="N-linked (GlcNAc...) asparagine" evidence="2">
    <location>
        <position position="130"/>
    </location>
</feature>
<feature type="glycosylation site" description="N-linked (GlcNAc...) asparagine" evidence="2">
    <location>
        <position position="140"/>
    </location>
</feature>
<feature type="glycosylation site" description="N-linked (GlcNAc...) asparagine" evidence="2">
    <location>
        <position position="209"/>
    </location>
</feature>
<feature type="splice variant" id="VSP_034849" description="In isoform 2." evidence="7">
    <location>
        <begin position="30"/>
        <end position="59"/>
    </location>
</feature>
<feature type="sequence conflict" description="In Ref. 2; AAY82251." evidence="8" ref="2">
    <original>L</original>
    <variation>P</variation>
    <location>
        <position position="158"/>
    </location>
</feature>
<feature type="sequence conflict" description="In Ref. 2; AAY82251." evidence="8" ref="2">
    <original>H</original>
    <variation>R</variation>
    <location>
        <position position="207"/>
    </location>
</feature>
<keyword id="KW-0025">Alternative splicing</keyword>
<keyword id="KW-0963">Cytoplasm</keyword>
<keyword id="KW-0256">Endoplasmic reticulum</keyword>
<keyword id="KW-0325">Glycoprotein</keyword>
<keyword id="KW-1267">Proteomics identification</keyword>
<keyword id="KW-1185">Reference proteome</keyword>
<keyword id="KW-0732">Signal</keyword>
<comment type="function">
    <text evidence="4 5">Functions as a positive regulator of TNF-induced NF-kappa-B signaling (PubMed:27671354). Regulates angiogenesis and cellular metabolism through interaction with PKM (PubMed:27199445).</text>
</comment>
<comment type="subunit">
    <text evidence="4 6">Oligomer (PubMed:29133832). Dimer (PubMed:29133832). Interacts with PKM; regulates angiogenesis and metabolism (PubMed:27199445).</text>
</comment>
<comment type="subcellular location">
    <subcellularLocation>
        <location evidence="6">Endoplasmic reticulum lumen</location>
    </subcellularLocation>
    <subcellularLocation>
        <location evidence="4">Cytoplasm</location>
    </subcellularLocation>
</comment>
<comment type="alternative products">
    <event type="alternative splicing"/>
    <isoform>
        <id>Q96S16-1</id>
        <name>1</name>
        <sequence type="displayed"/>
    </isoform>
    <isoform>
        <id>Q96S16-2</id>
        <name>2</name>
        <sequence type="described" ref="VSP_034849"/>
    </isoform>
</comment>
<comment type="PTM">
    <text evidence="6">N-glycosylated.</text>
</comment>
<comment type="sequence caution" evidence="8">
    <conflict type="erroneous initiation">
        <sequence resource="EMBL-CDS" id="AAH73785"/>
    </conflict>
    <text>Extended N-terminus.</text>
</comment>
<comment type="sequence caution" evidence="8">
    <conflict type="erroneous initiation">
        <sequence resource="EMBL-CDS" id="AAI37101"/>
    </conflict>
    <text>Extended N-terminus.</text>
</comment>
<comment type="sequence caution" evidence="8">
    <conflict type="erroneous initiation">
        <sequence resource="EMBL-CDS" id="AAI37102"/>
    </conflict>
    <text>Extended N-terminus.</text>
</comment>
<comment type="sequence caution" evidence="8">
    <conflict type="erroneous initiation">
        <sequence resource="EMBL-CDS" id="AAK61243"/>
    </conflict>
    <text>Extended N-terminus.</text>
</comment>
<comment type="sequence caution" evidence="8">
    <conflict type="erroneous initiation">
        <sequence resource="EMBL-CDS" id="EAW85754"/>
    </conflict>
    <text>Extended N-terminus.</text>
</comment>
<comment type="sequence caution" evidence="8">
    <conflict type="erroneous initiation">
        <sequence resource="EMBL-CDS" id="EAW85755"/>
    </conflict>
    <text>Extended N-terminus.</text>
</comment>
<accession>Q96S16</accession>
<accession>B2RNS7</accession>
<accession>D3DU58</accession>
<accession>Q4PKE3</accession>
<accession>Q4VBY1</accession>
<accession>Q6GMW5</accession>
<accession>Q71RB8</accession>
<protein>
    <recommendedName>
        <fullName evidence="8">JmjC domain-containing protein 8</fullName>
    </recommendedName>
    <alternativeName>
        <fullName>Jumonji domain-containing protein 8</fullName>
    </alternativeName>
</protein>
<reference key="1">
    <citation type="journal article" date="2004" name="Proc. Natl. Acad. Sci. U.S.A.">
        <title>Large-scale cDNA transfection screening for genes related to cancer development and progression.</title>
        <authorList>
            <person name="Wan D."/>
            <person name="Gong Y."/>
            <person name="Qin W."/>
            <person name="Zhang P."/>
            <person name="Li J."/>
            <person name="Wei L."/>
            <person name="Zhou X."/>
            <person name="Li H."/>
            <person name="Qiu X."/>
            <person name="Zhong F."/>
            <person name="He L."/>
            <person name="Yu J."/>
            <person name="Yao G."/>
            <person name="Jiang H."/>
            <person name="Qian L."/>
            <person name="Yu Y."/>
            <person name="Shu H."/>
            <person name="Chen X."/>
            <person name="Xu H."/>
            <person name="Guo M."/>
            <person name="Pan Z."/>
            <person name="Chen Y."/>
            <person name="Ge C."/>
            <person name="Yang S."/>
            <person name="Gu J."/>
        </authorList>
    </citation>
    <scope>NUCLEOTIDE SEQUENCE [LARGE SCALE MRNA] (ISOFORM 1)</scope>
</reference>
<reference key="2">
    <citation type="submission" date="2005-05" db="EMBL/GenBank/DDBJ databases">
        <authorList>
            <person name="Li H."/>
            <person name="Nong W."/>
            <person name="Zhou G."/>
            <person name="Ke R."/>
            <person name="Shen C."/>
            <person name="Zhong G."/>
            <person name="Zheng Z."/>
            <person name="Liang M."/>
            <person name="Wen S."/>
            <person name="Lin L."/>
            <person name="Yang S."/>
        </authorList>
    </citation>
    <scope>NUCLEOTIDE SEQUENCE [LARGE SCALE MRNA] (ISOFORM 2)</scope>
</reference>
<reference key="3">
    <citation type="journal article" date="2001" name="Hum. Mol. Genet.">
        <title>Sequence, structure and pathology of the fully annotated terminal 2 Mb of the short arm of human chromosome 16.</title>
        <authorList>
            <person name="Daniels R.J."/>
            <person name="Peden J.F."/>
            <person name="Lloyd C."/>
            <person name="Horsley S.W."/>
            <person name="Clark K."/>
            <person name="Tufarelli C."/>
            <person name="Kearney L."/>
            <person name="Buckle V.J."/>
            <person name="Doggett N.A."/>
            <person name="Flint J."/>
            <person name="Higgs D.R."/>
        </authorList>
    </citation>
    <scope>NUCLEOTIDE SEQUENCE [LARGE SCALE GENOMIC DNA]</scope>
</reference>
<reference key="4">
    <citation type="journal article" date="2004" name="Nature">
        <title>The sequence and analysis of duplication-rich human chromosome 16.</title>
        <authorList>
            <person name="Martin J."/>
            <person name="Han C."/>
            <person name="Gordon L.A."/>
            <person name="Terry A."/>
            <person name="Prabhakar S."/>
            <person name="She X."/>
            <person name="Xie G."/>
            <person name="Hellsten U."/>
            <person name="Chan Y.M."/>
            <person name="Altherr M."/>
            <person name="Couronne O."/>
            <person name="Aerts A."/>
            <person name="Bajorek E."/>
            <person name="Black S."/>
            <person name="Blumer H."/>
            <person name="Branscomb E."/>
            <person name="Brown N.C."/>
            <person name="Bruno W.J."/>
            <person name="Buckingham J.M."/>
            <person name="Callen D.F."/>
            <person name="Campbell C.S."/>
            <person name="Campbell M.L."/>
            <person name="Campbell E.W."/>
            <person name="Caoile C."/>
            <person name="Challacombe J.F."/>
            <person name="Chasteen L.A."/>
            <person name="Chertkov O."/>
            <person name="Chi H.C."/>
            <person name="Christensen M."/>
            <person name="Clark L.M."/>
            <person name="Cohn J.D."/>
            <person name="Denys M."/>
            <person name="Detter J.C."/>
            <person name="Dickson M."/>
            <person name="Dimitrijevic-Bussod M."/>
            <person name="Escobar J."/>
            <person name="Fawcett J.J."/>
            <person name="Flowers D."/>
            <person name="Fotopulos D."/>
            <person name="Glavina T."/>
            <person name="Gomez M."/>
            <person name="Gonzales E."/>
            <person name="Goodstein D."/>
            <person name="Goodwin L.A."/>
            <person name="Grady D.L."/>
            <person name="Grigoriev I."/>
            <person name="Groza M."/>
            <person name="Hammon N."/>
            <person name="Hawkins T."/>
            <person name="Haydu L."/>
            <person name="Hildebrand C.E."/>
            <person name="Huang W."/>
            <person name="Israni S."/>
            <person name="Jett J."/>
            <person name="Jewett P.B."/>
            <person name="Kadner K."/>
            <person name="Kimball H."/>
            <person name="Kobayashi A."/>
            <person name="Krawczyk M.-C."/>
            <person name="Leyba T."/>
            <person name="Longmire J.L."/>
            <person name="Lopez F."/>
            <person name="Lou Y."/>
            <person name="Lowry S."/>
            <person name="Ludeman T."/>
            <person name="Manohar C.F."/>
            <person name="Mark G.A."/>
            <person name="McMurray K.L."/>
            <person name="Meincke L.J."/>
            <person name="Morgan J."/>
            <person name="Moyzis R.K."/>
            <person name="Mundt M.O."/>
            <person name="Munk A.C."/>
            <person name="Nandkeshwar R.D."/>
            <person name="Pitluck S."/>
            <person name="Pollard M."/>
            <person name="Predki P."/>
            <person name="Parson-Quintana B."/>
            <person name="Ramirez L."/>
            <person name="Rash S."/>
            <person name="Retterer J."/>
            <person name="Ricke D.O."/>
            <person name="Robinson D.L."/>
            <person name="Rodriguez A."/>
            <person name="Salamov A."/>
            <person name="Saunders E.H."/>
            <person name="Scott D."/>
            <person name="Shough T."/>
            <person name="Stallings R.L."/>
            <person name="Stalvey M."/>
            <person name="Sutherland R.D."/>
            <person name="Tapia R."/>
            <person name="Tesmer J.G."/>
            <person name="Thayer N."/>
            <person name="Thompson L.S."/>
            <person name="Tice H."/>
            <person name="Torney D.C."/>
            <person name="Tran-Gyamfi M."/>
            <person name="Tsai M."/>
            <person name="Ulanovsky L.E."/>
            <person name="Ustaszewska A."/>
            <person name="Vo N."/>
            <person name="White P.S."/>
            <person name="Williams A.L."/>
            <person name="Wills P.L."/>
            <person name="Wu J.-R."/>
            <person name="Wu K."/>
            <person name="Yang J."/>
            <person name="DeJong P."/>
            <person name="Bruce D."/>
            <person name="Doggett N.A."/>
            <person name="Deaven L."/>
            <person name="Schmutz J."/>
            <person name="Grimwood J."/>
            <person name="Richardson P."/>
            <person name="Rokhsar D.S."/>
            <person name="Eichler E.E."/>
            <person name="Gilna P."/>
            <person name="Lucas S.M."/>
            <person name="Myers R.M."/>
            <person name="Rubin E.M."/>
            <person name="Pennacchio L.A."/>
        </authorList>
    </citation>
    <scope>NUCLEOTIDE SEQUENCE [LARGE SCALE GENOMIC DNA]</scope>
</reference>
<reference key="5">
    <citation type="submission" date="2005-09" db="EMBL/GenBank/DDBJ databases">
        <authorList>
            <person name="Mural R.J."/>
            <person name="Istrail S."/>
            <person name="Sutton G.G."/>
            <person name="Florea L."/>
            <person name="Halpern A.L."/>
            <person name="Mobarry C.M."/>
            <person name="Lippert R."/>
            <person name="Walenz B."/>
            <person name="Shatkay H."/>
            <person name="Dew I."/>
            <person name="Miller J.R."/>
            <person name="Flanigan M.J."/>
            <person name="Edwards N.J."/>
            <person name="Bolanos R."/>
            <person name="Fasulo D."/>
            <person name="Halldorsson B.V."/>
            <person name="Hannenhalli S."/>
            <person name="Turner R."/>
            <person name="Yooseph S."/>
            <person name="Lu F."/>
            <person name="Nusskern D.R."/>
            <person name="Shue B.C."/>
            <person name="Zheng X.H."/>
            <person name="Zhong F."/>
            <person name="Delcher A.L."/>
            <person name="Huson D.H."/>
            <person name="Kravitz S.A."/>
            <person name="Mouchard L."/>
            <person name="Reinert K."/>
            <person name="Remington K.A."/>
            <person name="Clark A.G."/>
            <person name="Waterman M.S."/>
            <person name="Eichler E.E."/>
            <person name="Adams M.D."/>
            <person name="Hunkapiller M.W."/>
            <person name="Myers E.W."/>
            <person name="Venter J.C."/>
        </authorList>
    </citation>
    <scope>NUCLEOTIDE SEQUENCE [LARGE SCALE GENOMIC DNA]</scope>
</reference>
<reference key="6">
    <citation type="journal article" date="2004" name="Genome Res.">
        <title>The status, quality, and expansion of the NIH full-length cDNA project: the Mammalian Gene Collection (MGC).</title>
        <authorList>
            <consortium name="The MGC Project Team"/>
        </authorList>
    </citation>
    <scope>NUCLEOTIDE SEQUENCE [LARGE SCALE MRNA] (ISOFORMS 1 AND 2)</scope>
    <source>
        <tissue>Kidney</tissue>
        <tissue>Uterus</tissue>
    </source>
</reference>
<reference key="7">
    <citation type="journal article" date="2016" name="Arterioscler. Thromb. Vasc. Biol.">
        <title>JMJD8 Regulates Angiogenic Sprouting and Cellular Metabolism by Interacting With Pyruvate Kinase M2 in Endothelial Cells.</title>
        <authorList>
            <person name="Boeckel J.N."/>
            <person name="Derlet A."/>
            <person name="Glaser S.F."/>
            <person name="Luczak A."/>
            <person name="Lucas T."/>
            <person name="Heumueller A.W."/>
            <person name="Krueger M."/>
            <person name="Zehendner C.M."/>
            <person name="Kaluza D."/>
            <person name="Doddaballapur A."/>
            <person name="Ohtani K."/>
            <person name="Treguer K."/>
            <person name="Dimmeler S."/>
        </authorList>
    </citation>
    <scope>INTERACTION WITH PKM</scope>
    <scope>SUBCELLULAR LOCATION</scope>
    <scope>FUNCTION</scope>
</reference>
<reference key="8">
    <citation type="journal article" date="2016" name="Sci. Rep.">
        <title>JMJD8 is a positive regulator of TNF-induced NF-kappaB signaling.</title>
        <authorList>
            <person name="Yeo K.S."/>
            <person name="Tan M.C."/>
            <person name="Wong W.Y."/>
            <person name="Loh S.W."/>
            <person name="Lam Y.L."/>
            <person name="Tan C.L."/>
            <person name="Lim Y.Y."/>
            <person name="Ea C.K."/>
        </authorList>
    </citation>
    <scope>FUNCTION</scope>
</reference>
<reference key="9">
    <citation type="journal article" date="2017" name="Sci. Rep.">
        <title>JMJD8 is a novel endoplasmic reticulum protein with a JmjC domain.</title>
        <authorList>
            <person name="Yeo K.S."/>
            <person name="Tan M.C."/>
            <person name="Lim Y.Y."/>
            <person name="Ea C.K."/>
        </authorList>
    </citation>
    <scope>GLYCOSYLATION</scope>
    <scope>SUBCELLULAR LOCATION</scope>
    <scope>SUBUNIT</scope>
</reference>
<gene>
    <name evidence="9" type="primary">JMJD8</name>
    <name evidence="9" type="synonym">C16orf20</name>
    <name type="ORF">PP14397</name>
</gene>
<evidence type="ECO:0000255" key="1"/>
<evidence type="ECO:0000255" key="2">
    <source>
        <dbReference type="PROSITE-ProRule" id="PRU00498"/>
    </source>
</evidence>
<evidence type="ECO:0000255" key="3">
    <source>
        <dbReference type="PROSITE-ProRule" id="PRU00538"/>
    </source>
</evidence>
<evidence type="ECO:0000269" key="4">
    <source>
    </source>
</evidence>
<evidence type="ECO:0000269" key="5">
    <source>
    </source>
</evidence>
<evidence type="ECO:0000269" key="6">
    <source>
    </source>
</evidence>
<evidence type="ECO:0000303" key="7">
    <source ref="2"/>
</evidence>
<evidence type="ECO:0000305" key="8"/>
<evidence type="ECO:0000312" key="9">
    <source>
        <dbReference type="HGNC" id="HGNC:14148"/>
    </source>
</evidence>
<organism>
    <name type="scientific">Homo sapiens</name>
    <name type="common">Human</name>
    <dbReference type="NCBI Taxonomy" id="9606"/>
    <lineage>
        <taxon>Eukaryota</taxon>
        <taxon>Metazoa</taxon>
        <taxon>Chordata</taxon>
        <taxon>Craniata</taxon>
        <taxon>Vertebrata</taxon>
        <taxon>Euteleostomi</taxon>
        <taxon>Mammalia</taxon>
        <taxon>Eutheria</taxon>
        <taxon>Euarchontoglires</taxon>
        <taxon>Primates</taxon>
        <taxon>Haplorrhini</taxon>
        <taxon>Catarrhini</taxon>
        <taxon>Hominidae</taxon>
        <taxon>Homo</taxon>
    </lineage>
</organism>
<dbReference type="EMBL" id="AF370420">
    <property type="protein sequence ID" value="AAQ15256.1"/>
    <property type="molecule type" value="mRNA"/>
</dbReference>
<dbReference type="EMBL" id="DQ074695">
    <property type="protein sequence ID" value="AAY82251.1"/>
    <property type="molecule type" value="mRNA"/>
</dbReference>
<dbReference type="EMBL" id="AE006464">
    <property type="protein sequence ID" value="AAK61243.1"/>
    <property type="status" value="ALT_INIT"/>
    <property type="molecule type" value="Genomic_DNA"/>
</dbReference>
<dbReference type="EMBL" id="Z92544">
    <property type="status" value="NOT_ANNOTATED_CDS"/>
    <property type="molecule type" value="Genomic_DNA"/>
</dbReference>
<dbReference type="EMBL" id="CH471112">
    <property type="protein sequence ID" value="EAW85754.1"/>
    <property type="status" value="ALT_INIT"/>
    <property type="molecule type" value="Genomic_DNA"/>
</dbReference>
<dbReference type="EMBL" id="CH471112">
    <property type="protein sequence ID" value="EAW85755.1"/>
    <property type="status" value="ALT_INIT"/>
    <property type="molecule type" value="Genomic_DNA"/>
</dbReference>
<dbReference type="EMBL" id="BC073785">
    <property type="protein sequence ID" value="AAH73785.1"/>
    <property type="status" value="ALT_INIT"/>
    <property type="molecule type" value="mRNA"/>
</dbReference>
<dbReference type="EMBL" id="BC094850">
    <property type="protein sequence ID" value="AAH94850.1"/>
    <property type="molecule type" value="mRNA"/>
</dbReference>
<dbReference type="EMBL" id="BC137100">
    <property type="protein sequence ID" value="AAI37101.1"/>
    <property type="status" value="ALT_INIT"/>
    <property type="molecule type" value="mRNA"/>
</dbReference>
<dbReference type="EMBL" id="BC137101">
    <property type="protein sequence ID" value="AAI37102.1"/>
    <property type="status" value="ALT_INIT"/>
    <property type="molecule type" value="mRNA"/>
</dbReference>
<dbReference type="CCDS" id="CCDS45369.2">
    <molecule id="Q96S16-1"/>
</dbReference>
<dbReference type="CCDS" id="CCDS92074.1">
    <molecule id="Q96S16-2"/>
</dbReference>
<dbReference type="RefSeq" id="NP_001005920.3">
    <molecule id="Q96S16-1"/>
    <property type="nucleotide sequence ID" value="NM_001005920.4"/>
</dbReference>
<dbReference type="RefSeq" id="NP_001310847.1">
    <property type="nucleotide sequence ID" value="NM_001323918.1"/>
</dbReference>
<dbReference type="RefSeq" id="NP_001310848.1">
    <property type="nucleotide sequence ID" value="NM_001323919.1"/>
</dbReference>
<dbReference type="RefSeq" id="NP_001310849.2">
    <molecule id="Q96S16-2"/>
    <property type="nucleotide sequence ID" value="NM_001323920.3"/>
</dbReference>
<dbReference type="RefSeq" id="NP_001310851.1">
    <property type="nucleotide sequence ID" value="NM_001323922.1"/>
</dbReference>
<dbReference type="SMR" id="Q96S16"/>
<dbReference type="BioGRID" id="130831">
    <property type="interactions" value="55"/>
</dbReference>
<dbReference type="FunCoup" id="Q96S16">
    <property type="interactions" value="1440"/>
</dbReference>
<dbReference type="IntAct" id="Q96S16">
    <property type="interactions" value="24"/>
</dbReference>
<dbReference type="STRING" id="9606.ENSP00000399475"/>
<dbReference type="GlyCosmos" id="Q96S16">
    <property type="glycosylation" value="3 sites, No reported glycans"/>
</dbReference>
<dbReference type="GlyGen" id="Q96S16">
    <property type="glycosylation" value="5 sites, 1 O-linked glycan (2 sites)"/>
</dbReference>
<dbReference type="iPTMnet" id="Q96S16"/>
<dbReference type="PhosphoSitePlus" id="Q96S16"/>
<dbReference type="BioMuta" id="JMJD8"/>
<dbReference type="DMDM" id="74717267"/>
<dbReference type="jPOST" id="Q96S16"/>
<dbReference type="MassIVE" id="Q96S16"/>
<dbReference type="PaxDb" id="9606-ENSP00000399475"/>
<dbReference type="PeptideAtlas" id="Q96S16"/>
<dbReference type="ProteomicsDB" id="78054">
    <molecule id="Q96S16-1"/>
</dbReference>
<dbReference type="ProteomicsDB" id="78055">
    <molecule id="Q96S16-2"/>
</dbReference>
<dbReference type="Pumba" id="Q96S16"/>
<dbReference type="Antibodypedia" id="22813">
    <property type="antibodies" value="96 antibodies from 22 providers"/>
</dbReference>
<dbReference type="DNASU" id="339123"/>
<dbReference type="Ensembl" id="ENST00000562824.5">
    <molecule id="Q96S16-2"/>
    <property type="protein sequence ID" value="ENSP00000454358.1"/>
    <property type="gene ID" value="ENSG00000161999.13"/>
</dbReference>
<dbReference type="Ensembl" id="ENST00000609261.6">
    <molecule id="Q96S16-1"/>
    <property type="protein sequence ID" value="ENSP00000477481.1"/>
    <property type="gene ID" value="ENSG00000161999.13"/>
</dbReference>
<dbReference type="GeneID" id="339123"/>
<dbReference type="KEGG" id="hsa:339123"/>
<dbReference type="MANE-Select" id="ENST00000609261.6">
    <property type="protein sequence ID" value="ENSP00000477481.1"/>
    <property type="RefSeq nucleotide sequence ID" value="NM_001005920.4"/>
    <property type="RefSeq protein sequence ID" value="NP_001005920.3"/>
</dbReference>
<dbReference type="UCSC" id="uc002ciw.2">
    <molecule id="Q96S16-1"/>
    <property type="organism name" value="human"/>
</dbReference>
<dbReference type="AGR" id="HGNC:14148"/>
<dbReference type="CTD" id="339123"/>
<dbReference type="DisGeNET" id="339123"/>
<dbReference type="GeneCards" id="JMJD8"/>
<dbReference type="HGNC" id="HGNC:14148">
    <property type="gene designation" value="JMJD8"/>
</dbReference>
<dbReference type="HPA" id="ENSG00000161999">
    <property type="expression patterns" value="Low tissue specificity"/>
</dbReference>
<dbReference type="MalaCards" id="JMJD8"/>
<dbReference type="neXtProt" id="NX_Q96S16"/>
<dbReference type="OpenTargets" id="ENSG00000161999"/>
<dbReference type="PharmGKB" id="PA162392531"/>
<dbReference type="VEuPathDB" id="HostDB:ENSG00000161999"/>
<dbReference type="eggNOG" id="KOG2131">
    <property type="taxonomic scope" value="Eukaryota"/>
</dbReference>
<dbReference type="GeneTree" id="ENSGT00390000015438"/>
<dbReference type="InParanoid" id="Q96S16"/>
<dbReference type="OMA" id="KEPHFHP"/>
<dbReference type="OrthoDB" id="438164at2759"/>
<dbReference type="PAN-GO" id="Q96S16">
    <property type="GO annotations" value="1 GO annotation based on evolutionary models"/>
</dbReference>
<dbReference type="PhylomeDB" id="Q96S16"/>
<dbReference type="TreeFam" id="TF313408"/>
<dbReference type="PathwayCommons" id="Q96S16"/>
<dbReference type="SignaLink" id="Q96S16"/>
<dbReference type="BioGRID-ORCS" id="339123">
    <property type="hits" value="31 hits in 1158 CRISPR screens"/>
</dbReference>
<dbReference type="ChiTaRS" id="JMJD8">
    <property type="organism name" value="human"/>
</dbReference>
<dbReference type="GenomeRNAi" id="339123"/>
<dbReference type="Pharos" id="Q96S16">
    <property type="development level" value="Tbio"/>
</dbReference>
<dbReference type="PRO" id="PR:Q96S16"/>
<dbReference type="Proteomes" id="UP000005640">
    <property type="component" value="Chromosome 16"/>
</dbReference>
<dbReference type="RNAct" id="Q96S16">
    <property type="molecule type" value="protein"/>
</dbReference>
<dbReference type="Bgee" id="ENSG00000161999">
    <property type="expression patterns" value="Expressed in apex of heart and 161 other cell types or tissues"/>
</dbReference>
<dbReference type="ExpressionAtlas" id="Q96S16">
    <property type="expression patterns" value="baseline and differential"/>
</dbReference>
<dbReference type="GO" id="GO:0005737">
    <property type="term" value="C:cytoplasm"/>
    <property type="evidence" value="ECO:0000314"/>
    <property type="project" value="UniProtKB"/>
</dbReference>
<dbReference type="GO" id="GO:0005783">
    <property type="term" value="C:endoplasmic reticulum"/>
    <property type="evidence" value="ECO:0000314"/>
    <property type="project" value="UniProtKB"/>
</dbReference>
<dbReference type="GO" id="GO:0005788">
    <property type="term" value="C:endoplasmic reticulum lumen"/>
    <property type="evidence" value="ECO:0000314"/>
    <property type="project" value="UniProtKB"/>
</dbReference>
<dbReference type="GO" id="GO:0005634">
    <property type="term" value="C:nucleus"/>
    <property type="evidence" value="ECO:0000314"/>
    <property type="project" value="UniProtKB"/>
</dbReference>
<dbReference type="GO" id="GO:0000987">
    <property type="term" value="F:cis-regulatory region sequence-specific DNA binding"/>
    <property type="evidence" value="ECO:0000318"/>
    <property type="project" value="GO_Central"/>
</dbReference>
<dbReference type="GO" id="GO:0043123">
    <property type="term" value="P:positive regulation of canonical NF-kappaB signal transduction"/>
    <property type="evidence" value="ECO:0000315"/>
    <property type="project" value="UniProtKB"/>
</dbReference>
<dbReference type="GO" id="GO:1903672">
    <property type="term" value="P:positive regulation of sprouting angiogenesis"/>
    <property type="evidence" value="ECO:0000315"/>
    <property type="project" value="UniProtKB"/>
</dbReference>
<dbReference type="GO" id="GO:0006110">
    <property type="term" value="P:regulation of glycolytic process"/>
    <property type="evidence" value="ECO:0000315"/>
    <property type="project" value="UniProtKB"/>
</dbReference>
<dbReference type="GO" id="GO:1903302">
    <property type="term" value="P:regulation of pyruvate kinase activity"/>
    <property type="evidence" value="ECO:0000315"/>
    <property type="project" value="UniProtKB"/>
</dbReference>
<dbReference type="FunFam" id="2.60.120.650:FF:000039">
    <property type="entry name" value="JmjC domain-containing protein 8"/>
    <property type="match status" value="1"/>
</dbReference>
<dbReference type="Gene3D" id="2.60.120.650">
    <property type="entry name" value="Cupin"/>
    <property type="match status" value="1"/>
</dbReference>
<dbReference type="InterPro" id="IPR041667">
    <property type="entry name" value="Cupin_8"/>
</dbReference>
<dbReference type="InterPro" id="IPR003347">
    <property type="entry name" value="JmjC_dom"/>
</dbReference>
<dbReference type="InterPro" id="IPR050910">
    <property type="entry name" value="JMJD6_ArgDemeth/LysHydrox"/>
</dbReference>
<dbReference type="PANTHER" id="PTHR12480">
    <property type="entry name" value="ARGININE DEMETHYLASE AND LYSYL-HYDROXYLASE JMJD"/>
    <property type="match status" value="1"/>
</dbReference>
<dbReference type="PANTHER" id="PTHR12480:SF21">
    <property type="entry name" value="JMJC DOMAIN-CONTAINING PROTEIN 8"/>
    <property type="match status" value="1"/>
</dbReference>
<dbReference type="Pfam" id="PF13621">
    <property type="entry name" value="Cupin_8"/>
    <property type="match status" value="1"/>
</dbReference>
<dbReference type="SUPFAM" id="SSF51197">
    <property type="entry name" value="Clavaminate synthase-like"/>
    <property type="match status" value="1"/>
</dbReference>
<dbReference type="PROSITE" id="PS51184">
    <property type="entry name" value="JMJC"/>
    <property type="match status" value="1"/>
</dbReference>
<sequence>MAPASRLLALWALAAVALPGSGAEGDGGWRPGGPGAVAEEERCTVERRADLTYAEFVQQYAFVRPVILQGLTDNSRFRALCSRDRLLASFGDRVVRLSTANTYSYHKVDLPFQEYVEQLLHPQDPTSLGNDTLYFFGDNNFTEWASLFRHYSPPPFGLLGTAPAYSFGIAGAGSGVPFHWHGPGYSEVIYGRKRWFLYPPEKTPEFHPNKTTLAWLRDTYPALPPSARPLECTIRAGEVLYFPDRWWHATLNLDTSVFISTFLG</sequence>
<name>JMJD8_HUMAN</name>
<proteinExistence type="evidence at protein level"/>